<accession>Q9H3Y0</accession>
<sequence length="253" mass="28605">MPLLPSTVGLAGLLFWAGQAVNALIMPNATPAPAQPESTAMRLLSGLEVPRYRRKRHISVRDMNALLDYHNHIRASVYPPAANMEYMVWDKRLARAAEAWATQCIWAHGPSQLMRYVGQNLSIHSGQYRSVVDLMKSWSEEKWHYLFPAPRDCNPHCPWRCDGPTCSHYTQMVWASSNRLGCAIHTCSSISVWGNTWHRAAYLVCNYAIKGNWIGESPYKMGKPCSSCPPSYQGSCNSNMCFKGLKSNKFTWF</sequence>
<protein>
    <recommendedName>
        <fullName>Peptidase inhibitor R3HDML</fullName>
    </recommendedName>
    <alternativeName>
        <fullName>Cysteine-rich secretory protein R3HDML</fullName>
    </alternativeName>
</protein>
<name>CRSPL_HUMAN</name>
<feature type="signal peptide" evidence="2">
    <location>
        <begin position="1"/>
        <end position="24"/>
    </location>
</feature>
<feature type="propeptide" id="PRO_0000287635" evidence="1">
    <location>
        <begin position="25"/>
        <end position="56"/>
    </location>
</feature>
<feature type="chain" id="PRO_0000287636" description="Peptidase inhibitor R3HDML">
    <location>
        <begin position="57"/>
        <end position="253"/>
    </location>
</feature>
<feature type="domain" description="SCP">
    <location>
        <begin position="67"/>
        <end position="207"/>
    </location>
</feature>
<feature type="glycosylation site" description="N-linked (GlcNAc...) asparagine" evidence="2">
    <location>
        <position position="120"/>
    </location>
</feature>
<feature type="sequence variant" id="VAR_032339" description="In dbSNP:rs11699901.">
    <original>F</original>
    <variation>C</variation>
    <location>
        <position position="15"/>
    </location>
</feature>
<feature type="sequence variant" id="VAR_048834" description="In dbSNP:rs36117710.">
    <original>D</original>
    <variation>N</variation>
    <location>
        <position position="68"/>
    </location>
</feature>
<comment type="function">
    <text evidence="1">Putative serine protease inhibitor.</text>
</comment>
<comment type="subcellular location">
    <subcellularLocation>
        <location evidence="3">Secreted</location>
    </subcellularLocation>
</comment>
<comment type="similarity">
    <text evidence="3">Belongs to the CRISP family.</text>
</comment>
<comment type="caution">
    <text evidence="3">Despite its name, it does not contain a R3H domain.</text>
</comment>
<gene>
    <name type="primary">R3HDML</name>
</gene>
<proteinExistence type="evidence at transcript level"/>
<organism>
    <name type="scientific">Homo sapiens</name>
    <name type="common">Human</name>
    <dbReference type="NCBI Taxonomy" id="9606"/>
    <lineage>
        <taxon>Eukaryota</taxon>
        <taxon>Metazoa</taxon>
        <taxon>Chordata</taxon>
        <taxon>Craniata</taxon>
        <taxon>Vertebrata</taxon>
        <taxon>Euteleostomi</taxon>
        <taxon>Mammalia</taxon>
        <taxon>Eutheria</taxon>
        <taxon>Euarchontoglires</taxon>
        <taxon>Primates</taxon>
        <taxon>Haplorrhini</taxon>
        <taxon>Catarrhini</taxon>
        <taxon>Hominidae</taxon>
        <taxon>Homo</taxon>
    </lineage>
</organism>
<keyword id="KW-0325">Glycoprotein</keyword>
<keyword id="KW-0646">Protease inhibitor</keyword>
<keyword id="KW-1185">Reference proteome</keyword>
<keyword id="KW-0964">Secreted</keyword>
<keyword id="KW-0732">Signal</keyword>
<dbReference type="EMBL" id="AL117382">
    <property type="status" value="NOT_ANNOTATED_CDS"/>
    <property type="molecule type" value="Genomic_DNA"/>
</dbReference>
<dbReference type="EMBL" id="BC107048">
    <property type="protein sequence ID" value="AAI07049.1"/>
    <property type="molecule type" value="mRNA"/>
</dbReference>
<dbReference type="CCDS" id="CCDS13329.1"/>
<dbReference type="RefSeq" id="NP_848586.1">
    <property type="nucleotide sequence ID" value="NM_178491.4"/>
</dbReference>
<dbReference type="SMR" id="Q9H3Y0"/>
<dbReference type="BioGRID" id="126761">
    <property type="interactions" value="5"/>
</dbReference>
<dbReference type="FunCoup" id="Q9H3Y0">
    <property type="interactions" value="14"/>
</dbReference>
<dbReference type="IntAct" id="Q9H3Y0">
    <property type="interactions" value="3"/>
</dbReference>
<dbReference type="STRING" id="9606.ENSP00000217043"/>
<dbReference type="GlyCosmos" id="Q9H3Y0">
    <property type="glycosylation" value="1 site, No reported glycans"/>
</dbReference>
<dbReference type="GlyGen" id="Q9H3Y0">
    <property type="glycosylation" value="1 site"/>
</dbReference>
<dbReference type="BioMuta" id="R3HDML"/>
<dbReference type="DMDM" id="74752628"/>
<dbReference type="MassIVE" id="Q9H3Y0"/>
<dbReference type="PaxDb" id="9606-ENSP00000217043"/>
<dbReference type="PeptideAtlas" id="Q9H3Y0"/>
<dbReference type="Antibodypedia" id="76963">
    <property type="antibodies" value="30 antibodies from 9 providers"/>
</dbReference>
<dbReference type="DNASU" id="140902"/>
<dbReference type="Ensembl" id="ENST00000217043.4">
    <property type="protein sequence ID" value="ENSP00000217043.3"/>
    <property type="gene ID" value="ENSG00000101074.5"/>
</dbReference>
<dbReference type="GeneID" id="140902"/>
<dbReference type="KEGG" id="hsa:140902"/>
<dbReference type="MANE-Select" id="ENST00000217043.4">
    <property type="protein sequence ID" value="ENSP00000217043.3"/>
    <property type="RefSeq nucleotide sequence ID" value="NM_178491.4"/>
    <property type="RefSeq protein sequence ID" value="NP_848586.1"/>
</dbReference>
<dbReference type="UCSC" id="uc002xls.3">
    <property type="organism name" value="human"/>
</dbReference>
<dbReference type="AGR" id="HGNC:16249"/>
<dbReference type="CTD" id="140902"/>
<dbReference type="DisGeNET" id="140902"/>
<dbReference type="GeneCards" id="R3HDML"/>
<dbReference type="HGNC" id="HGNC:16249">
    <property type="gene designation" value="R3HDML"/>
</dbReference>
<dbReference type="HPA" id="ENSG00000101074">
    <property type="expression patterns" value="Tissue enriched (intestine)"/>
</dbReference>
<dbReference type="neXtProt" id="NX_Q9H3Y0"/>
<dbReference type="OpenTargets" id="ENSG00000101074"/>
<dbReference type="PharmGKB" id="PA34099"/>
<dbReference type="VEuPathDB" id="HostDB:ENSG00000101074"/>
<dbReference type="eggNOG" id="KOG3017">
    <property type="taxonomic scope" value="Eukaryota"/>
</dbReference>
<dbReference type="GeneTree" id="ENSGT00940000161086"/>
<dbReference type="HOGENOM" id="CLU_035730_2_2_1"/>
<dbReference type="InParanoid" id="Q9H3Y0"/>
<dbReference type="OMA" id="CNSNMCF"/>
<dbReference type="OrthoDB" id="414826at2759"/>
<dbReference type="PAN-GO" id="Q9H3Y0">
    <property type="GO annotations" value="1 GO annotation based on evolutionary models"/>
</dbReference>
<dbReference type="PhylomeDB" id="Q9H3Y0"/>
<dbReference type="TreeFam" id="TF316148"/>
<dbReference type="PathwayCommons" id="Q9H3Y0"/>
<dbReference type="SignaLink" id="Q9H3Y0"/>
<dbReference type="BioGRID-ORCS" id="140902">
    <property type="hits" value="12 hits in 1134 CRISPR screens"/>
</dbReference>
<dbReference type="ChiTaRS" id="R3HDML">
    <property type="organism name" value="human"/>
</dbReference>
<dbReference type="GenomeRNAi" id="140902"/>
<dbReference type="Pharos" id="Q9H3Y0">
    <property type="development level" value="Tdark"/>
</dbReference>
<dbReference type="PRO" id="PR:Q9H3Y0"/>
<dbReference type="Proteomes" id="UP000005640">
    <property type="component" value="Chromosome 20"/>
</dbReference>
<dbReference type="RNAct" id="Q9H3Y0">
    <property type="molecule type" value="protein"/>
</dbReference>
<dbReference type="Bgee" id="ENSG00000101074">
    <property type="expression patterns" value="Expressed in male germ line stem cell (sensu Vertebrata) in testis and 20 other cell types or tissues"/>
</dbReference>
<dbReference type="GO" id="GO:0005615">
    <property type="term" value="C:extracellular space"/>
    <property type="evidence" value="ECO:0000318"/>
    <property type="project" value="GO_Central"/>
</dbReference>
<dbReference type="GO" id="GO:0030414">
    <property type="term" value="F:peptidase inhibitor activity"/>
    <property type="evidence" value="ECO:0007669"/>
    <property type="project" value="UniProtKB-KW"/>
</dbReference>
<dbReference type="CDD" id="cd18815">
    <property type="entry name" value="CAP_R3HDML"/>
    <property type="match status" value="1"/>
</dbReference>
<dbReference type="FunFam" id="3.40.33.10:FF:000003">
    <property type="entry name" value="Peptidase inhibitor 15"/>
    <property type="match status" value="1"/>
</dbReference>
<dbReference type="Gene3D" id="3.40.33.10">
    <property type="entry name" value="CAP"/>
    <property type="match status" value="1"/>
</dbReference>
<dbReference type="InterPro" id="IPR014044">
    <property type="entry name" value="CAP_dom"/>
</dbReference>
<dbReference type="InterPro" id="IPR035940">
    <property type="entry name" value="CAP_sf"/>
</dbReference>
<dbReference type="InterPro" id="IPR001283">
    <property type="entry name" value="CRISP-related"/>
</dbReference>
<dbReference type="InterPro" id="IPR047899">
    <property type="entry name" value="R3HDML_CAP"/>
</dbReference>
<dbReference type="PANTHER" id="PTHR10334">
    <property type="entry name" value="CYSTEINE-RICH SECRETORY PROTEIN-RELATED"/>
    <property type="match status" value="1"/>
</dbReference>
<dbReference type="Pfam" id="PF00188">
    <property type="entry name" value="CAP"/>
    <property type="match status" value="1"/>
</dbReference>
<dbReference type="PRINTS" id="PR00837">
    <property type="entry name" value="V5TPXLIKE"/>
</dbReference>
<dbReference type="SMART" id="SM00198">
    <property type="entry name" value="SCP"/>
    <property type="match status" value="1"/>
</dbReference>
<dbReference type="SUPFAM" id="SSF55797">
    <property type="entry name" value="PR-1-like"/>
    <property type="match status" value="1"/>
</dbReference>
<reference key="1">
    <citation type="journal article" date="2001" name="Nature">
        <title>The DNA sequence and comparative analysis of human chromosome 20.</title>
        <authorList>
            <person name="Deloukas P."/>
            <person name="Matthews L.H."/>
            <person name="Ashurst J.L."/>
            <person name="Burton J."/>
            <person name="Gilbert J.G.R."/>
            <person name="Jones M."/>
            <person name="Stavrides G."/>
            <person name="Almeida J.P."/>
            <person name="Babbage A.K."/>
            <person name="Bagguley C.L."/>
            <person name="Bailey J."/>
            <person name="Barlow K.F."/>
            <person name="Bates K.N."/>
            <person name="Beard L.M."/>
            <person name="Beare D.M."/>
            <person name="Beasley O.P."/>
            <person name="Bird C.P."/>
            <person name="Blakey S.E."/>
            <person name="Bridgeman A.M."/>
            <person name="Brown A.J."/>
            <person name="Buck D."/>
            <person name="Burrill W.D."/>
            <person name="Butler A.P."/>
            <person name="Carder C."/>
            <person name="Carter N.P."/>
            <person name="Chapman J.C."/>
            <person name="Clamp M."/>
            <person name="Clark G."/>
            <person name="Clark L.N."/>
            <person name="Clark S.Y."/>
            <person name="Clee C.M."/>
            <person name="Clegg S."/>
            <person name="Cobley V.E."/>
            <person name="Collier R.E."/>
            <person name="Connor R.E."/>
            <person name="Corby N.R."/>
            <person name="Coulson A."/>
            <person name="Coville G.J."/>
            <person name="Deadman R."/>
            <person name="Dhami P.D."/>
            <person name="Dunn M."/>
            <person name="Ellington A.G."/>
            <person name="Frankland J.A."/>
            <person name="Fraser A."/>
            <person name="French L."/>
            <person name="Garner P."/>
            <person name="Grafham D.V."/>
            <person name="Griffiths C."/>
            <person name="Griffiths M.N.D."/>
            <person name="Gwilliam R."/>
            <person name="Hall R.E."/>
            <person name="Hammond S."/>
            <person name="Harley J.L."/>
            <person name="Heath P.D."/>
            <person name="Ho S."/>
            <person name="Holden J.L."/>
            <person name="Howden P.J."/>
            <person name="Huckle E."/>
            <person name="Hunt A.R."/>
            <person name="Hunt S.E."/>
            <person name="Jekosch K."/>
            <person name="Johnson C.M."/>
            <person name="Johnson D."/>
            <person name="Kay M.P."/>
            <person name="Kimberley A.M."/>
            <person name="King A."/>
            <person name="Knights A."/>
            <person name="Laird G.K."/>
            <person name="Lawlor S."/>
            <person name="Lehvaeslaiho M.H."/>
            <person name="Leversha M.A."/>
            <person name="Lloyd C."/>
            <person name="Lloyd D.M."/>
            <person name="Lovell J.D."/>
            <person name="Marsh V.L."/>
            <person name="Martin S.L."/>
            <person name="McConnachie L.J."/>
            <person name="McLay K."/>
            <person name="McMurray A.A."/>
            <person name="Milne S.A."/>
            <person name="Mistry D."/>
            <person name="Moore M.J.F."/>
            <person name="Mullikin J.C."/>
            <person name="Nickerson T."/>
            <person name="Oliver K."/>
            <person name="Parker A."/>
            <person name="Patel R."/>
            <person name="Pearce T.A.V."/>
            <person name="Peck A.I."/>
            <person name="Phillimore B.J.C.T."/>
            <person name="Prathalingam S.R."/>
            <person name="Plumb R.W."/>
            <person name="Ramsay H."/>
            <person name="Rice C.M."/>
            <person name="Ross M.T."/>
            <person name="Scott C.E."/>
            <person name="Sehra H.K."/>
            <person name="Shownkeen R."/>
            <person name="Sims S."/>
            <person name="Skuce C.D."/>
            <person name="Smith M.L."/>
            <person name="Soderlund C."/>
            <person name="Steward C.A."/>
            <person name="Sulston J.E."/>
            <person name="Swann R.M."/>
            <person name="Sycamore N."/>
            <person name="Taylor R."/>
            <person name="Tee L."/>
            <person name="Thomas D.W."/>
            <person name="Thorpe A."/>
            <person name="Tracey A."/>
            <person name="Tromans A.C."/>
            <person name="Vaudin M."/>
            <person name="Wall M."/>
            <person name="Wallis J.M."/>
            <person name="Whitehead S.L."/>
            <person name="Whittaker P."/>
            <person name="Willey D.L."/>
            <person name="Williams L."/>
            <person name="Williams S.A."/>
            <person name="Wilming L."/>
            <person name="Wray P.W."/>
            <person name="Hubbard T."/>
            <person name="Durbin R.M."/>
            <person name="Bentley D.R."/>
            <person name="Beck S."/>
            <person name="Rogers J."/>
        </authorList>
    </citation>
    <scope>NUCLEOTIDE SEQUENCE [LARGE SCALE GENOMIC DNA]</scope>
</reference>
<reference key="2">
    <citation type="journal article" date="2004" name="Genome Res.">
        <title>The status, quality, and expansion of the NIH full-length cDNA project: the Mammalian Gene Collection (MGC).</title>
        <authorList>
            <consortium name="The MGC Project Team"/>
        </authorList>
    </citation>
    <scope>NUCLEOTIDE SEQUENCE [LARGE SCALE MRNA]</scope>
</reference>
<evidence type="ECO:0000250" key="1"/>
<evidence type="ECO:0000255" key="2"/>
<evidence type="ECO:0000305" key="3"/>